<sequence length="589" mass="67260">MFSILNKLGIIWLALANISNCDNSKSGHKSIPKYNVKYYHANIPKDFANRFVELNDKIVENGSFEILGIDGQPSKNQYLCFTPNPNTAVNVSIESAQRNTRSKEIENEPKSEAEIIQRGVEMIEKSFSRKDCVFAYGSNGGYWTLGYCYGDKVVQFHENLQHFVATGKHKPEYPDYIYVLGRFKGSSKKPTNLDNQSPWASNNLDLSEFTIHESSIISDATAKNEQSRFLQHTLYDGEICDLTRKPRSIDIIYKCDPNHRGRIEILDQQEIKTCVYQMVIGVPKLCSLDEFRPNKVEDQIIDIDCKLIDQTNKVKADKLSYQDFFYYTDDIPSDNKIFPIPHSYKVSLNNYNLSPCGHGFYLGQSKLPINSPSVYFNFRHILVFNDQYHSSSDLLEKLGKMLKVCVGNKILSPHIENKRQSLLSWNDTFILWFELYDFYGSFISLVKVSRDGSKEELELKLRLINPETMLDQDGDLVKVPEFDAPNNAWNFQKFSKGKGSALDSTNNDKNNKATAENDKQYQSTSTDIVTVTVTESLETTSSEDGTEEVSNEMVILKKLADKLGMTDINELHQAIEDLDIELEVQHDEL</sequence>
<comment type="function">
    <text evidence="1">Lectin involved in the quality control of the secretory pathway. As a member of the endoplasmic reticulum-associated degradation lumenal (ERAD-L) surveillance system, targets misfolded endoplasmic reticulum lumenal glycoproteins for degradation (By similarity).</text>
</comment>
<comment type="subunit">
    <text evidence="1">Interacts with missfolded ER lumenal proteins.</text>
</comment>
<comment type="subcellular location">
    <subcellularLocation>
        <location evidence="5">Endoplasmic reticulum membrane</location>
        <topology evidence="1">Peripheral membrane protein</topology>
        <orientation evidence="1">Lumenal side</orientation>
    </subcellularLocation>
</comment>
<comment type="similarity">
    <text evidence="7">Belongs to the OS-9 family.</text>
</comment>
<evidence type="ECO:0000250" key="1"/>
<evidence type="ECO:0000250" key="2">
    <source>
        <dbReference type="UniProtKB" id="Q13438"/>
    </source>
</evidence>
<evidence type="ECO:0000255" key="3"/>
<evidence type="ECO:0000255" key="4">
    <source>
        <dbReference type="PROSITE-ProRule" id="PRU01262"/>
    </source>
</evidence>
<evidence type="ECO:0000255" key="5">
    <source>
        <dbReference type="PROSITE-ProRule" id="PRU10138"/>
    </source>
</evidence>
<evidence type="ECO:0000256" key="6">
    <source>
        <dbReference type="SAM" id="MobiDB-lite"/>
    </source>
</evidence>
<evidence type="ECO:0000305" key="7"/>
<accession>Q6BJ08</accession>
<keyword id="KW-1015">Disulfide bond</keyword>
<keyword id="KW-0256">Endoplasmic reticulum</keyword>
<keyword id="KW-0325">Glycoprotein</keyword>
<keyword id="KW-0430">Lectin</keyword>
<keyword id="KW-0472">Membrane</keyword>
<keyword id="KW-1185">Reference proteome</keyword>
<keyword id="KW-0732">Signal</keyword>
<name>OS9_DEBHA</name>
<organism>
    <name type="scientific">Debaryomyces hansenii (strain ATCC 36239 / CBS 767 / BCRC 21394 / JCM 1990 / NBRC 0083 / IGC 2968)</name>
    <name type="common">Yeast</name>
    <name type="synonym">Torulaspora hansenii</name>
    <dbReference type="NCBI Taxonomy" id="284592"/>
    <lineage>
        <taxon>Eukaryota</taxon>
        <taxon>Fungi</taxon>
        <taxon>Dikarya</taxon>
        <taxon>Ascomycota</taxon>
        <taxon>Saccharomycotina</taxon>
        <taxon>Pichiomycetes</taxon>
        <taxon>Debaryomycetaceae</taxon>
        <taxon>Debaryomyces</taxon>
    </lineage>
</organism>
<feature type="signal peptide" evidence="3">
    <location>
        <begin position="1"/>
        <end position="21"/>
    </location>
</feature>
<feature type="chain" id="PRO_0000043269" description="Protein OS-9 homolog">
    <location>
        <begin position="22"/>
        <end position="589"/>
    </location>
</feature>
<feature type="domain" description="MRH" evidence="4">
    <location>
        <begin position="130"/>
        <end position="288"/>
    </location>
</feature>
<feature type="region of interest" description="Disordered" evidence="6">
    <location>
        <begin position="497"/>
        <end position="520"/>
    </location>
</feature>
<feature type="short sequence motif" description="Prevents secretion from ER" evidence="5">
    <location>
        <begin position="586"/>
        <end position="589"/>
    </location>
</feature>
<feature type="compositionally biased region" description="Basic and acidic residues" evidence="6">
    <location>
        <begin position="509"/>
        <end position="519"/>
    </location>
</feature>
<feature type="binding site" evidence="2">
    <location>
        <position position="143"/>
    </location>
    <ligand>
        <name>a mannooligosaccharide derivative</name>
        <dbReference type="ChEBI" id="CHEBI:71274"/>
    </ligand>
</feature>
<feature type="binding site" evidence="2">
    <location>
        <position position="155"/>
    </location>
    <ligand>
        <name>a mannooligosaccharide derivative</name>
        <dbReference type="ChEBI" id="CHEBI:71274"/>
    </ligand>
</feature>
<feature type="binding site" evidence="2">
    <location>
        <position position="241"/>
    </location>
    <ligand>
        <name>a mannooligosaccharide derivative</name>
        <dbReference type="ChEBI" id="CHEBI:71274"/>
    </ligand>
</feature>
<feature type="binding site" evidence="2">
    <location>
        <position position="247"/>
    </location>
    <ligand>
        <name>a mannooligosaccharide derivative</name>
        <dbReference type="ChEBI" id="CHEBI:71274"/>
    </ligand>
</feature>
<feature type="binding site" evidence="2">
    <location>
        <position position="270"/>
    </location>
    <ligand>
        <name>a mannooligosaccharide derivative</name>
        <dbReference type="ChEBI" id="CHEBI:71274"/>
    </ligand>
</feature>
<feature type="binding site" evidence="2">
    <location>
        <position position="276"/>
    </location>
    <ligand>
        <name>a mannooligosaccharide derivative</name>
        <dbReference type="ChEBI" id="CHEBI:71274"/>
    </ligand>
</feature>
<feature type="glycosylation site" description="N-linked (GlcNAc...) asparagine" evidence="3">
    <location>
        <position position="17"/>
    </location>
</feature>
<feature type="glycosylation site" description="N-linked (GlcNAc...) asparagine" evidence="3">
    <location>
        <position position="61"/>
    </location>
</feature>
<feature type="glycosylation site" description="N-linked (GlcNAc...) asparagine" evidence="3">
    <location>
        <position position="90"/>
    </location>
</feature>
<feature type="glycosylation site" description="N-linked (GlcNAc...) asparagine" evidence="3">
    <location>
        <position position="426"/>
    </location>
</feature>
<feature type="disulfide bond" evidence="4">
    <location>
        <begin position="132"/>
        <end position="148"/>
    </location>
</feature>
<feature type="disulfide bond" evidence="4">
    <location>
        <begin position="240"/>
        <end position="274"/>
    </location>
</feature>
<feature type="disulfide bond" evidence="4">
    <location>
        <begin position="255"/>
        <end position="286"/>
    </location>
</feature>
<reference key="1">
    <citation type="journal article" date="2004" name="Nature">
        <title>Genome evolution in yeasts.</title>
        <authorList>
            <person name="Dujon B."/>
            <person name="Sherman D."/>
            <person name="Fischer G."/>
            <person name="Durrens P."/>
            <person name="Casaregola S."/>
            <person name="Lafontaine I."/>
            <person name="de Montigny J."/>
            <person name="Marck C."/>
            <person name="Neuveglise C."/>
            <person name="Talla E."/>
            <person name="Goffard N."/>
            <person name="Frangeul L."/>
            <person name="Aigle M."/>
            <person name="Anthouard V."/>
            <person name="Babour A."/>
            <person name="Barbe V."/>
            <person name="Barnay S."/>
            <person name="Blanchin S."/>
            <person name="Beckerich J.-M."/>
            <person name="Beyne E."/>
            <person name="Bleykasten C."/>
            <person name="Boisrame A."/>
            <person name="Boyer J."/>
            <person name="Cattolico L."/>
            <person name="Confanioleri F."/>
            <person name="de Daruvar A."/>
            <person name="Despons L."/>
            <person name="Fabre E."/>
            <person name="Fairhead C."/>
            <person name="Ferry-Dumazet H."/>
            <person name="Groppi A."/>
            <person name="Hantraye F."/>
            <person name="Hennequin C."/>
            <person name="Jauniaux N."/>
            <person name="Joyet P."/>
            <person name="Kachouri R."/>
            <person name="Kerrest A."/>
            <person name="Koszul R."/>
            <person name="Lemaire M."/>
            <person name="Lesur I."/>
            <person name="Ma L."/>
            <person name="Muller H."/>
            <person name="Nicaud J.-M."/>
            <person name="Nikolski M."/>
            <person name="Oztas S."/>
            <person name="Ozier-Kalogeropoulos O."/>
            <person name="Pellenz S."/>
            <person name="Potier S."/>
            <person name="Richard G.-F."/>
            <person name="Straub M.-L."/>
            <person name="Suleau A."/>
            <person name="Swennen D."/>
            <person name="Tekaia F."/>
            <person name="Wesolowski-Louvel M."/>
            <person name="Westhof E."/>
            <person name="Wirth B."/>
            <person name="Zeniou-Meyer M."/>
            <person name="Zivanovic Y."/>
            <person name="Bolotin-Fukuhara M."/>
            <person name="Thierry A."/>
            <person name="Bouchier C."/>
            <person name="Caudron B."/>
            <person name="Scarpelli C."/>
            <person name="Gaillardin C."/>
            <person name="Weissenbach J."/>
            <person name="Wincker P."/>
            <person name="Souciet J.-L."/>
        </authorList>
    </citation>
    <scope>NUCLEOTIDE SEQUENCE [LARGE SCALE GENOMIC DNA]</scope>
    <source>
        <strain>ATCC 36239 / CBS 767 / BCRC 21394 / JCM 1990 / NBRC 0083 / IGC 2968</strain>
    </source>
</reference>
<protein>
    <recommendedName>
        <fullName>Protein OS-9 homolog</fullName>
    </recommendedName>
</protein>
<proteinExistence type="inferred from homology"/>
<gene>
    <name type="primary">YOS9</name>
    <name type="ordered locus">DEHA2G06116g</name>
</gene>
<dbReference type="EMBL" id="CR382139">
    <property type="protein sequence ID" value="CAG90274.2"/>
    <property type="molecule type" value="Genomic_DNA"/>
</dbReference>
<dbReference type="RefSeq" id="XP_461813.2">
    <property type="nucleotide sequence ID" value="XM_461813.1"/>
</dbReference>
<dbReference type="STRING" id="284592.Q6BJ08"/>
<dbReference type="GlyCosmos" id="Q6BJ08">
    <property type="glycosylation" value="4 sites, No reported glycans"/>
</dbReference>
<dbReference type="GeneID" id="2904692"/>
<dbReference type="KEGG" id="dha:DEHA2G06116g"/>
<dbReference type="VEuPathDB" id="FungiDB:DEHA2G06116g"/>
<dbReference type="eggNOG" id="KOG3394">
    <property type="taxonomic scope" value="Eukaryota"/>
</dbReference>
<dbReference type="HOGENOM" id="CLU_036515_0_0_1"/>
<dbReference type="InParanoid" id="Q6BJ08"/>
<dbReference type="OMA" id="TFILWFE"/>
<dbReference type="OrthoDB" id="448954at2759"/>
<dbReference type="Proteomes" id="UP000000599">
    <property type="component" value="Chromosome G"/>
</dbReference>
<dbReference type="GO" id="GO:0005788">
    <property type="term" value="C:endoplasmic reticulum lumen"/>
    <property type="evidence" value="ECO:0007669"/>
    <property type="project" value="TreeGrafter"/>
</dbReference>
<dbReference type="GO" id="GO:0005789">
    <property type="term" value="C:endoplasmic reticulum membrane"/>
    <property type="evidence" value="ECO:0007669"/>
    <property type="project" value="UniProtKB-SubCell"/>
</dbReference>
<dbReference type="GO" id="GO:0030246">
    <property type="term" value="F:carbohydrate binding"/>
    <property type="evidence" value="ECO:0007669"/>
    <property type="project" value="UniProtKB-KW"/>
</dbReference>
<dbReference type="GO" id="GO:0030968">
    <property type="term" value="P:endoplasmic reticulum unfolded protein response"/>
    <property type="evidence" value="ECO:0007669"/>
    <property type="project" value="InterPro"/>
</dbReference>
<dbReference type="GO" id="GO:0030970">
    <property type="term" value="P:retrograde protein transport, ER to cytosol"/>
    <property type="evidence" value="ECO:0007669"/>
    <property type="project" value="TreeGrafter"/>
</dbReference>
<dbReference type="Gene3D" id="2.70.130.10">
    <property type="entry name" value="Mannose-6-phosphate receptor binding domain"/>
    <property type="match status" value="1"/>
</dbReference>
<dbReference type="InterPro" id="IPR009011">
    <property type="entry name" value="Man6P_isomerase_rcpt-bd_dom_sf"/>
</dbReference>
<dbReference type="InterPro" id="IPR044865">
    <property type="entry name" value="MRH_dom"/>
</dbReference>
<dbReference type="InterPro" id="IPR045149">
    <property type="entry name" value="OS-9-like"/>
</dbReference>
<dbReference type="InterPro" id="IPR012913">
    <property type="entry name" value="OS9-like_dom"/>
</dbReference>
<dbReference type="PANTHER" id="PTHR15414:SF0">
    <property type="entry name" value="ENDOPLASMIC RETICULUM LECTIN 1"/>
    <property type="match status" value="1"/>
</dbReference>
<dbReference type="PANTHER" id="PTHR15414">
    <property type="entry name" value="OS-9-RELATED"/>
    <property type="match status" value="1"/>
</dbReference>
<dbReference type="Pfam" id="PF07915">
    <property type="entry name" value="PRKCSH"/>
    <property type="match status" value="1"/>
</dbReference>
<dbReference type="SUPFAM" id="SSF50911">
    <property type="entry name" value="Mannose 6-phosphate receptor domain"/>
    <property type="match status" value="1"/>
</dbReference>
<dbReference type="PROSITE" id="PS00014">
    <property type="entry name" value="ER_TARGET"/>
    <property type="match status" value="1"/>
</dbReference>
<dbReference type="PROSITE" id="PS51914">
    <property type="entry name" value="MRH"/>
    <property type="match status" value="1"/>
</dbReference>